<comment type="function">
    <text evidence="1">One of two assembly initiator proteins, it binds directly to the 5'-end of the 23S rRNA, where it nucleates assembly of the 50S subunit.</text>
</comment>
<comment type="function">
    <text evidence="1">One of the proteins that surrounds the polypeptide exit tunnel on the outside of the subunit.</text>
</comment>
<comment type="subunit">
    <text evidence="1">Part of the 50S ribosomal subunit.</text>
</comment>
<comment type="similarity">
    <text evidence="1">Belongs to the universal ribosomal protein uL24 family.</text>
</comment>
<proteinExistence type="inferred from homology"/>
<reference key="1">
    <citation type="journal article" date="2008" name="DNA Res.">
        <title>Complete genome sequence of Finegoldia magna, an anaerobic opportunistic pathogen.</title>
        <authorList>
            <person name="Goto T."/>
            <person name="Yamashita A."/>
            <person name="Hirakawa H."/>
            <person name="Matsutani M."/>
            <person name="Todo K."/>
            <person name="Ohshima K."/>
            <person name="Toh H."/>
            <person name="Miyamoto K."/>
            <person name="Kuhara S."/>
            <person name="Hattori M."/>
            <person name="Shimizu T."/>
            <person name="Akimoto S."/>
        </authorList>
    </citation>
    <scope>NUCLEOTIDE SEQUENCE [LARGE SCALE GENOMIC DNA]</scope>
    <source>
        <strain>ATCC 29328 / DSM 20472 / WAL 2508</strain>
    </source>
</reference>
<feature type="chain" id="PRO_1000165946" description="Large ribosomal subunit protein uL24">
    <location>
        <begin position="1"/>
        <end position="102"/>
    </location>
</feature>
<evidence type="ECO:0000255" key="1">
    <source>
        <dbReference type="HAMAP-Rule" id="MF_01326"/>
    </source>
</evidence>
<evidence type="ECO:0000305" key="2"/>
<dbReference type="EMBL" id="AP008971">
    <property type="protein sequence ID" value="BAG07584.1"/>
    <property type="molecule type" value="Genomic_DNA"/>
</dbReference>
<dbReference type="RefSeq" id="WP_002837398.1">
    <property type="nucleotide sequence ID" value="NC_010376.1"/>
</dbReference>
<dbReference type="SMR" id="B0RZS0"/>
<dbReference type="STRING" id="334413.FMG_0166"/>
<dbReference type="KEGG" id="fma:FMG_0166"/>
<dbReference type="eggNOG" id="COG0198">
    <property type="taxonomic scope" value="Bacteria"/>
</dbReference>
<dbReference type="HOGENOM" id="CLU_093315_2_0_9"/>
<dbReference type="Proteomes" id="UP000001319">
    <property type="component" value="Chromosome"/>
</dbReference>
<dbReference type="GO" id="GO:1990904">
    <property type="term" value="C:ribonucleoprotein complex"/>
    <property type="evidence" value="ECO:0007669"/>
    <property type="project" value="UniProtKB-KW"/>
</dbReference>
<dbReference type="GO" id="GO:0005840">
    <property type="term" value="C:ribosome"/>
    <property type="evidence" value="ECO:0007669"/>
    <property type="project" value="UniProtKB-KW"/>
</dbReference>
<dbReference type="GO" id="GO:0019843">
    <property type="term" value="F:rRNA binding"/>
    <property type="evidence" value="ECO:0007669"/>
    <property type="project" value="UniProtKB-UniRule"/>
</dbReference>
<dbReference type="GO" id="GO:0003735">
    <property type="term" value="F:structural constituent of ribosome"/>
    <property type="evidence" value="ECO:0007669"/>
    <property type="project" value="InterPro"/>
</dbReference>
<dbReference type="GO" id="GO:0006412">
    <property type="term" value="P:translation"/>
    <property type="evidence" value="ECO:0007669"/>
    <property type="project" value="UniProtKB-UniRule"/>
</dbReference>
<dbReference type="CDD" id="cd06089">
    <property type="entry name" value="KOW_RPL26"/>
    <property type="match status" value="1"/>
</dbReference>
<dbReference type="FunFam" id="2.30.30.30:FF:000004">
    <property type="entry name" value="50S ribosomal protein L24"/>
    <property type="match status" value="1"/>
</dbReference>
<dbReference type="Gene3D" id="2.30.30.30">
    <property type="match status" value="1"/>
</dbReference>
<dbReference type="HAMAP" id="MF_01326_B">
    <property type="entry name" value="Ribosomal_uL24_B"/>
    <property type="match status" value="1"/>
</dbReference>
<dbReference type="InterPro" id="IPR005824">
    <property type="entry name" value="KOW"/>
</dbReference>
<dbReference type="InterPro" id="IPR014722">
    <property type="entry name" value="Rib_uL2_dom2"/>
</dbReference>
<dbReference type="InterPro" id="IPR003256">
    <property type="entry name" value="Ribosomal_uL24"/>
</dbReference>
<dbReference type="InterPro" id="IPR005825">
    <property type="entry name" value="Ribosomal_uL24_CS"/>
</dbReference>
<dbReference type="InterPro" id="IPR041988">
    <property type="entry name" value="Ribosomal_uL24_KOW"/>
</dbReference>
<dbReference type="InterPro" id="IPR008991">
    <property type="entry name" value="Translation_prot_SH3-like_sf"/>
</dbReference>
<dbReference type="NCBIfam" id="TIGR01079">
    <property type="entry name" value="rplX_bact"/>
    <property type="match status" value="1"/>
</dbReference>
<dbReference type="PANTHER" id="PTHR12903">
    <property type="entry name" value="MITOCHONDRIAL RIBOSOMAL PROTEIN L24"/>
    <property type="match status" value="1"/>
</dbReference>
<dbReference type="Pfam" id="PF00467">
    <property type="entry name" value="KOW"/>
    <property type="match status" value="1"/>
</dbReference>
<dbReference type="Pfam" id="PF17136">
    <property type="entry name" value="ribosomal_L24"/>
    <property type="match status" value="1"/>
</dbReference>
<dbReference type="SMART" id="SM00739">
    <property type="entry name" value="KOW"/>
    <property type="match status" value="1"/>
</dbReference>
<dbReference type="SUPFAM" id="SSF50104">
    <property type="entry name" value="Translation proteins SH3-like domain"/>
    <property type="match status" value="1"/>
</dbReference>
<dbReference type="PROSITE" id="PS01108">
    <property type="entry name" value="RIBOSOMAL_L24"/>
    <property type="match status" value="1"/>
</dbReference>
<organism>
    <name type="scientific">Finegoldia magna (strain ATCC 29328 / DSM 20472 / WAL 2508)</name>
    <name type="common">Peptostreptococcus magnus</name>
    <dbReference type="NCBI Taxonomy" id="334413"/>
    <lineage>
        <taxon>Bacteria</taxon>
        <taxon>Bacillati</taxon>
        <taxon>Bacillota</taxon>
        <taxon>Tissierellia</taxon>
        <taxon>Tissierellales</taxon>
        <taxon>Peptoniphilaceae</taxon>
        <taxon>Finegoldia</taxon>
    </lineage>
</organism>
<keyword id="KW-1185">Reference proteome</keyword>
<keyword id="KW-0687">Ribonucleoprotein</keyword>
<keyword id="KW-0689">Ribosomal protein</keyword>
<keyword id="KW-0694">RNA-binding</keyword>
<keyword id="KW-0699">rRNA-binding</keyword>
<name>RL24_FINM2</name>
<gene>
    <name evidence="1" type="primary">rplX</name>
    <name type="ordered locus">FMG_0166</name>
</gene>
<accession>B0RZS0</accession>
<sequence length="102" mass="11266">MKIKNGDTVIVISGKDKGKTGNVIEVLAKKNKVVVEGVNIVTKHQKANGRGVESGLIKKEAPIDVSNVMYYDAKNKKGTRLGYKFEDGKKVRFMKSNNETIK</sequence>
<protein>
    <recommendedName>
        <fullName evidence="1">Large ribosomal subunit protein uL24</fullName>
    </recommendedName>
    <alternativeName>
        <fullName evidence="2">50S ribosomal protein L24</fullName>
    </alternativeName>
</protein>